<name>CCD4_ARATH</name>
<organism>
    <name type="scientific">Arabidopsis thaliana</name>
    <name type="common">Mouse-ear cress</name>
    <dbReference type="NCBI Taxonomy" id="3702"/>
    <lineage>
        <taxon>Eukaryota</taxon>
        <taxon>Viridiplantae</taxon>
        <taxon>Streptophyta</taxon>
        <taxon>Embryophyta</taxon>
        <taxon>Tracheophyta</taxon>
        <taxon>Spermatophyta</taxon>
        <taxon>Magnoliopsida</taxon>
        <taxon>eudicotyledons</taxon>
        <taxon>Gunneridae</taxon>
        <taxon>Pentapetalae</taxon>
        <taxon>rosids</taxon>
        <taxon>malvids</taxon>
        <taxon>Brassicales</taxon>
        <taxon>Brassicaceae</taxon>
        <taxon>Camelineae</taxon>
        <taxon>Arabidopsis</taxon>
    </lineage>
</organism>
<accession>O49675</accession>
<comment type="function">
    <text evidence="1">May be involved in carotenoid cleavage.</text>
</comment>
<comment type="cofactor">
    <cofactor evidence="3">
        <name>Fe(2+)</name>
        <dbReference type="ChEBI" id="CHEBI:29033"/>
    </cofactor>
    <text evidence="3">Binds 1 Fe(2+) ion per subunit.</text>
</comment>
<comment type="subunit">
    <text evidence="6 9">Interacts with VAR3 (PubMed:15340011). Interacts with PGM48 (PubMed:27895226).</text>
</comment>
<comment type="interaction">
    <interactant intactId="EBI-632411">
        <id>O49675</id>
    </interactant>
    <interactant intactId="EBI-632401">
        <id>Q8S9K3</id>
        <label>VAR3</label>
    </interactant>
    <organismsDiffer>false</organismsDiffer>
    <experiments>2</experiments>
</comment>
<comment type="subcellular location">
    <subcellularLocation>
        <location evidence="6 7 8">Plastid</location>
        <location evidence="6 7 8">Chloroplast</location>
        <location evidence="6 7 8">Plastoglobule</location>
    </subcellularLocation>
</comment>
<comment type="tissue specificity">
    <text evidence="10">Mostly expressed in flowers (e.g. sepals and petals), siliques, seeds, leaves and cotyledons.</text>
</comment>
<comment type="induction">
    <text evidence="10">Probably proteolytically degraded by PGM48 during leaves senescence (PubMed:28534654). Not induced by drought stress.</text>
</comment>
<comment type="similarity">
    <text evidence="13">Belongs to the carotenoid oxygenase family.</text>
</comment>
<evidence type="ECO:0000250" key="1">
    <source>
        <dbReference type="UniProtKB" id="O24592"/>
    </source>
</evidence>
<evidence type="ECO:0000250" key="2">
    <source>
        <dbReference type="UniProtKB" id="O65572"/>
    </source>
</evidence>
<evidence type="ECO:0000250" key="3">
    <source>
        <dbReference type="UniProtKB" id="Q28175"/>
    </source>
</evidence>
<evidence type="ECO:0000255" key="4"/>
<evidence type="ECO:0000256" key="5">
    <source>
        <dbReference type="SAM" id="MobiDB-lite"/>
    </source>
</evidence>
<evidence type="ECO:0000269" key="6">
    <source>
    </source>
</evidence>
<evidence type="ECO:0000269" key="7">
    <source>
    </source>
</evidence>
<evidence type="ECO:0000269" key="8">
    <source>
    </source>
</evidence>
<evidence type="ECO:0000269" key="9">
    <source>
    </source>
</evidence>
<evidence type="ECO:0000269" key="10">
    <source>
    </source>
</evidence>
<evidence type="ECO:0000303" key="11">
    <source>
    </source>
</evidence>
<evidence type="ECO:0000303" key="12">
    <source>
    </source>
</evidence>
<evidence type="ECO:0000305" key="13"/>
<evidence type="ECO:0000312" key="14">
    <source>
        <dbReference type="Araport" id="AT4G19170"/>
    </source>
</evidence>
<evidence type="ECO:0000312" key="15">
    <source>
        <dbReference type="EMBL" id="CAA16706.1"/>
    </source>
</evidence>
<proteinExistence type="evidence at protein level"/>
<feature type="transit peptide" description="Chloroplast" evidence="4">
    <location>
        <begin position="1"/>
        <end position="34"/>
    </location>
</feature>
<feature type="chain" id="PRO_0000285993" description="Probable carotenoid cleavage dioxygenase 4, chloroplastic">
    <location>
        <begin position="35"/>
        <end position="595"/>
    </location>
</feature>
<feature type="region of interest" description="Disordered" evidence="5">
    <location>
        <begin position="41"/>
        <end position="74"/>
    </location>
</feature>
<feature type="compositionally biased region" description="Basic residues" evidence="5">
    <location>
        <begin position="55"/>
        <end position="64"/>
    </location>
</feature>
<feature type="binding site" evidence="1">
    <location>
        <position position="287"/>
    </location>
    <ligand>
        <name>Fe cation</name>
        <dbReference type="ChEBI" id="CHEBI:24875"/>
    </ligand>
</feature>
<feature type="binding site" evidence="1">
    <location>
        <position position="336"/>
    </location>
    <ligand>
        <name>Fe cation</name>
        <dbReference type="ChEBI" id="CHEBI:24875"/>
    </ligand>
</feature>
<feature type="binding site" evidence="1">
    <location>
        <position position="404"/>
    </location>
    <ligand>
        <name>Fe cation</name>
        <dbReference type="ChEBI" id="CHEBI:24875"/>
    </ligand>
</feature>
<feature type="binding site" evidence="1">
    <location>
        <position position="583"/>
    </location>
    <ligand>
        <name>Fe cation</name>
        <dbReference type="ChEBI" id="CHEBI:24875"/>
    </ligand>
</feature>
<dbReference type="EC" id="1.14.99.-" evidence="2"/>
<dbReference type="EMBL" id="AL021687">
    <property type="protein sequence ID" value="CAA16706.1"/>
    <property type="molecule type" value="Genomic_DNA"/>
</dbReference>
<dbReference type="EMBL" id="AL161550">
    <property type="protein sequence ID" value="CAB78919.1"/>
    <property type="molecule type" value="Genomic_DNA"/>
</dbReference>
<dbReference type="EMBL" id="CP002687">
    <property type="protein sequence ID" value="AEE84154.1"/>
    <property type="molecule type" value="Genomic_DNA"/>
</dbReference>
<dbReference type="EMBL" id="AY136353">
    <property type="protein sequence ID" value="AAM97019.1"/>
    <property type="molecule type" value="mRNA"/>
</dbReference>
<dbReference type="EMBL" id="BT008785">
    <property type="protein sequence ID" value="AAP68224.1"/>
    <property type="molecule type" value="mRNA"/>
</dbReference>
<dbReference type="EMBL" id="AY056789">
    <property type="protein sequence ID" value="AAL10480.1"/>
    <property type="molecule type" value="mRNA"/>
</dbReference>
<dbReference type="EMBL" id="AK227175">
    <property type="protein sequence ID" value="BAE99215.1"/>
    <property type="molecule type" value="mRNA"/>
</dbReference>
<dbReference type="PIR" id="T04438">
    <property type="entry name" value="T04438"/>
</dbReference>
<dbReference type="RefSeq" id="NP_193652.1">
    <property type="nucleotide sequence ID" value="NM_118036.3"/>
</dbReference>
<dbReference type="SMR" id="O49675"/>
<dbReference type="BioGRID" id="12948">
    <property type="interactions" value="2"/>
</dbReference>
<dbReference type="FunCoup" id="O49675">
    <property type="interactions" value="177"/>
</dbReference>
<dbReference type="IntAct" id="O49675">
    <property type="interactions" value="2"/>
</dbReference>
<dbReference type="STRING" id="3702.O49675"/>
<dbReference type="iPTMnet" id="O49675"/>
<dbReference type="PaxDb" id="3702-AT4G19170.1"/>
<dbReference type="ProteomicsDB" id="223960"/>
<dbReference type="EnsemblPlants" id="AT4G19170.1">
    <property type="protein sequence ID" value="AT4G19170.1"/>
    <property type="gene ID" value="AT4G19170"/>
</dbReference>
<dbReference type="GeneID" id="827655"/>
<dbReference type="Gramene" id="AT4G19170.1">
    <property type="protein sequence ID" value="AT4G19170.1"/>
    <property type="gene ID" value="AT4G19170"/>
</dbReference>
<dbReference type="KEGG" id="ath:AT4G19170"/>
<dbReference type="Araport" id="AT4G19170"/>
<dbReference type="TAIR" id="AT4G19170">
    <property type="gene designation" value="NCED4"/>
</dbReference>
<dbReference type="eggNOG" id="KOG1285">
    <property type="taxonomic scope" value="Eukaryota"/>
</dbReference>
<dbReference type="HOGENOM" id="CLU_016472_0_0_1"/>
<dbReference type="InParanoid" id="O49675"/>
<dbReference type="OMA" id="KTEECWY"/>
<dbReference type="PhylomeDB" id="O49675"/>
<dbReference type="BioCyc" id="ARA:AT4G19170-MONOMER"/>
<dbReference type="PRO" id="PR:O49675"/>
<dbReference type="Proteomes" id="UP000006548">
    <property type="component" value="Chromosome 4"/>
</dbReference>
<dbReference type="ExpressionAtlas" id="O49675">
    <property type="expression patterns" value="baseline and differential"/>
</dbReference>
<dbReference type="GO" id="GO:0009507">
    <property type="term" value="C:chloroplast"/>
    <property type="evidence" value="ECO:0007005"/>
    <property type="project" value="TAIR"/>
</dbReference>
<dbReference type="GO" id="GO:0005829">
    <property type="term" value="C:cytosol"/>
    <property type="evidence" value="ECO:0007005"/>
    <property type="project" value="TAIR"/>
</dbReference>
<dbReference type="GO" id="GO:0010287">
    <property type="term" value="C:plastoglobule"/>
    <property type="evidence" value="ECO:0007005"/>
    <property type="project" value="TAIR"/>
</dbReference>
<dbReference type="GO" id="GO:0046872">
    <property type="term" value="F:metal ion binding"/>
    <property type="evidence" value="ECO:0007669"/>
    <property type="project" value="UniProtKB-KW"/>
</dbReference>
<dbReference type="GO" id="GO:0016702">
    <property type="term" value="F:oxidoreductase activity, acting on single donors with incorporation of molecular oxygen, incorporation of two atoms of oxygen"/>
    <property type="evidence" value="ECO:0007669"/>
    <property type="project" value="InterPro"/>
</dbReference>
<dbReference type="GO" id="GO:1901811">
    <property type="term" value="P:beta-carotene catabolic process"/>
    <property type="evidence" value="ECO:0000315"/>
    <property type="project" value="TAIR"/>
</dbReference>
<dbReference type="InterPro" id="IPR004294">
    <property type="entry name" value="Carotenoid_Oase"/>
</dbReference>
<dbReference type="PANTHER" id="PTHR10543">
    <property type="entry name" value="BETA-CAROTENE DIOXYGENASE"/>
    <property type="match status" value="1"/>
</dbReference>
<dbReference type="PANTHER" id="PTHR10543:SF46">
    <property type="entry name" value="CAROTENOID CLEAVAGE DIOXYGENASE 4, CHLOROPLASTIC-RELATED"/>
    <property type="match status" value="1"/>
</dbReference>
<dbReference type="Pfam" id="PF03055">
    <property type="entry name" value="RPE65"/>
    <property type="match status" value="1"/>
</dbReference>
<gene>
    <name type="primary">CCD4</name>
    <name evidence="11 12" type="synonym">NCED4</name>
    <name evidence="14" type="ordered locus">At4g19170</name>
    <name evidence="15" type="ORF">T18B16.140</name>
</gene>
<keyword id="KW-0150">Chloroplast</keyword>
<keyword id="KW-0223">Dioxygenase</keyword>
<keyword id="KW-0408">Iron</keyword>
<keyword id="KW-0479">Metal-binding</keyword>
<keyword id="KW-0560">Oxidoreductase</keyword>
<keyword id="KW-0934">Plastid</keyword>
<keyword id="KW-1185">Reference proteome</keyword>
<keyword id="KW-0809">Transit peptide</keyword>
<reference key="1">
    <citation type="journal article" date="1999" name="Nature">
        <title>Sequence and analysis of chromosome 4 of the plant Arabidopsis thaliana.</title>
        <authorList>
            <person name="Mayer K.F.X."/>
            <person name="Schueller C."/>
            <person name="Wambutt R."/>
            <person name="Murphy G."/>
            <person name="Volckaert G."/>
            <person name="Pohl T."/>
            <person name="Duesterhoeft A."/>
            <person name="Stiekema W."/>
            <person name="Entian K.-D."/>
            <person name="Terryn N."/>
            <person name="Harris B."/>
            <person name="Ansorge W."/>
            <person name="Brandt P."/>
            <person name="Grivell L.A."/>
            <person name="Rieger M."/>
            <person name="Weichselgartner M."/>
            <person name="de Simone V."/>
            <person name="Obermaier B."/>
            <person name="Mache R."/>
            <person name="Mueller M."/>
            <person name="Kreis M."/>
            <person name="Delseny M."/>
            <person name="Puigdomenech P."/>
            <person name="Watson M."/>
            <person name="Schmidtheini T."/>
            <person name="Reichert B."/>
            <person name="Portetelle D."/>
            <person name="Perez-Alonso M."/>
            <person name="Boutry M."/>
            <person name="Bancroft I."/>
            <person name="Vos P."/>
            <person name="Hoheisel J."/>
            <person name="Zimmermann W."/>
            <person name="Wedler H."/>
            <person name="Ridley P."/>
            <person name="Langham S.-A."/>
            <person name="McCullagh B."/>
            <person name="Bilham L."/>
            <person name="Robben J."/>
            <person name="van der Schueren J."/>
            <person name="Grymonprez B."/>
            <person name="Chuang Y.-J."/>
            <person name="Vandenbussche F."/>
            <person name="Braeken M."/>
            <person name="Weltjens I."/>
            <person name="Voet M."/>
            <person name="Bastiaens I."/>
            <person name="Aert R."/>
            <person name="Defoor E."/>
            <person name="Weitzenegger T."/>
            <person name="Bothe G."/>
            <person name="Ramsperger U."/>
            <person name="Hilbert H."/>
            <person name="Braun M."/>
            <person name="Holzer E."/>
            <person name="Brandt A."/>
            <person name="Peters S."/>
            <person name="van Staveren M."/>
            <person name="Dirkse W."/>
            <person name="Mooijman P."/>
            <person name="Klein Lankhorst R."/>
            <person name="Rose M."/>
            <person name="Hauf J."/>
            <person name="Koetter P."/>
            <person name="Berneiser S."/>
            <person name="Hempel S."/>
            <person name="Feldpausch M."/>
            <person name="Lamberth S."/>
            <person name="Van den Daele H."/>
            <person name="De Keyser A."/>
            <person name="Buysshaert C."/>
            <person name="Gielen J."/>
            <person name="Villarroel R."/>
            <person name="De Clercq R."/>
            <person name="van Montagu M."/>
            <person name="Rogers J."/>
            <person name="Cronin A."/>
            <person name="Quail M.A."/>
            <person name="Bray-Allen S."/>
            <person name="Clark L."/>
            <person name="Doggett J."/>
            <person name="Hall S."/>
            <person name="Kay M."/>
            <person name="Lennard N."/>
            <person name="McLay K."/>
            <person name="Mayes R."/>
            <person name="Pettett A."/>
            <person name="Rajandream M.A."/>
            <person name="Lyne M."/>
            <person name="Benes V."/>
            <person name="Rechmann S."/>
            <person name="Borkova D."/>
            <person name="Bloecker H."/>
            <person name="Scharfe M."/>
            <person name="Grimm M."/>
            <person name="Loehnert T.-H."/>
            <person name="Dose S."/>
            <person name="de Haan M."/>
            <person name="Maarse A.C."/>
            <person name="Schaefer M."/>
            <person name="Mueller-Auer S."/>
            <person name="Gabel C."/>
            <person name="Fuchs M."/>
            <person name="Fartmann B."/>
            <person name="Granderath K."/>
            <person name="Dauner D."/>
            <person name="Herzl A."/>
            <person name="Neumann S."/>
            <person name="Argiriou A."/>
            <person name="Vitale D."/>
            <person name="Liguori R."/>
            <person name="Piravandi E."/>
            <person name="Massenet O."/>
            <person name="Quigley F."/>
            <person name="Clabauld G."/>
            <person name="Muendlein A."/>
            <person name="Felber R."/>
            <person name="Schnabl S."/>
            <person name="Hiller R."/>
            <person name="Schmidt W."/>
            <person name="Lecharny A."/>
            <person name="Aubourg S."/>
            <person name="Chefdor F."/>
            <person name="Cooke R."/>
            <person name="Berger C."/>
            <person name="Monfort A."/>
            <person name="Casacuberta E."/>
            <person name="Gibbons T."/>
            <person name="Weber N."/>
            <person name="Vandenbol M."/>
            <person name="Bargues M."/>
            <person name="Terol J."/>
            <person name="Torres A."/>
            <person name="Perez-Perez A."/>
            <person name="Purnelle B."/>
            <person name="Bent E."/>
            <person name="Johnson S."/>
            <person name="Tacon D."/>
            <person name="Jesse T."/>
            <person name="Heijnen L."/>
            <person name="Schwarz S."/>
            <person name="Scholler P."/>
            <person name="Heber S."/>
            <person name="Francs P."/>
            <person name="Bielke C."/>
            <person name="Frishman D."/>
            <person name="Haase D."/>
            <person name="Lemcke K."/>
            <person name="Mewes H.-W."/>
            <person name="Stocker S."/>
            <person name="Zaccaria P."/>
            <person name="Bevan M."/>
            <person name="Wilson R.K."/>
            <person name="de la Bastide M."/>
            <person name="Habermann K."/>
            <person name="Parnell L."/>
            <person name="Dedhia N."/>
            <person name="Gnoj L."/>
            <person name="Schutz K."/>
            <person name="Huang E."/>
            <person name="Spiegel L."/>
            <person name="Sekhon M."/>
            <person name="Murray J."/>
            <person name="Sheet P."/>
            <person name="Cordes M."/>
            <person name="Abu-Threideh J."/>
            <person name="Stoneking T."/>
            <person name="Kalicki J."/>
            <person name="Graves T."/>
            <person name="Harmon G."/>
            <person name="Edwards J."/>
            <person name="Latreille P."/>
            <person name="Courtney L."/>
            <person name="Cloud J."/>
            <person name="Abbott A."/>
            <person name="Scott K."/>
            <person name="Johnson D."/>
            <person name="Minx P."/>
            <person name="Bentley D."/>
            <person name="Fulton B."/>
            <person name="Miller N."/>
            <person name="Greco T."/>
            <person name="Kemp K."/>
            <person name="Kramer J."/>
            <person name="Fulton L."/>
            <person name="Mardis E."/>
            <person name="Dante M."/>
            <person name="Pepin K."/>
            <person name="Hillier L.W."/>
            <person name="Nelson J."/>
            <person name="Spieth J."/>
            <person name="Ryan E."/>
            <person name="Andrews S."/>
            <person name="Geisel C."/>
            <person name="Layman D."/>
            <person name="Du H."/>
            <person name="Ali J."/>
            <person name="Berghoff A."/>
            <person name="Jones K."/>
            <person name="Drone K."/>
            <person name="Cotton M."/>
            <person name="Joshu C."/>
            <person name="Antonoiu B."/>
            <person name="Zidanic M."/>
            <person name="Strong C."/>
            <person name="Sun H."/>
            <person name="Lamar B."/>
            <person name="Yordan C."/>
            <person name="Ma P."/>
            <person name="Zhong J."/>
            <person name="Preston R."/>
            <person name="Vil D."/>
            <person name="Shekher M."/>
            <person name="Matero A."/>
            <person name="Shah R."/>
            <person name="Swaby I.K."/>
            <person name="O'Shaughnessy A."/>
            <person name="Rodriguez M."/>
            <person name="Hoffman J."/>
            <person name="Till S."/>
            <person name="Granat S."/>
            <person name="Shohdy N."/>
            <person name="Hasegawa A."/>
            <person name="Hameed A."/>
            <person name="Lodhi M."/>
            <person name="Johnson A."/>
            <person name="Chen E."/>
            <person name="Marra M.A."/>
            <person name="Martienssen R."/>
            <person name="McCombie W.R."/>
        </authorList>
    </citation>
    <scope>NUCLEOTIDE SEQUENCE [LARGE SCALE GENOMIC DNA]</scope>
    <source>
        <strain>cv. Columbia</strain>
    </source>
</reference>
<reference key="2">
    <citation type="journal article" date="2017" name="Plant J.">
        <title>Araport11: a complete reannotation of the Arabidopsis thaliana reference genome.</title>
        <authorList>
            <person name="Cheng C.Y."/>
            <person name="Krishnakumar V."/>
            <person name="Chan A.P."/>
            <person name="Thibaud-Nissen F."/>
            <person name="Schobel S."/>
            <person name="Town C.D."/>
        </authorList>
    </citation>
    <scope>GENOME REANNOTATION</scope>
    <source>
        <strain>cv. Columbia</strain>
    </source>
</reference>
<reference key="3">
    <citation type="journal article" date="2003" name="Science">
        <title>Empirical analysis of transcriptional activity in the Arabidopsis genome.</title>
        <authorList>
            <person name="Yamada K."/>
            <person name="Lim J."/>
            <person name="Dale J.M."/>
            <person name="Chen H."/>
            <person name="Shinn P."/>
            <person name="Palm C.J."/>
            <person name="Southwick A.M."/>
            <person name="Wu H.C."/>
            <person name="Kim C.J."/>
            <person name="Nguyen M."/>
            <person name="Pham P.K."/>
            <person name="Cheuk R.F."/>
            <person name="Karlin-Newmann G."/>
            <person name="Liu S.X."/>
            <person name="Lam B."/>
            <person name="Sakano H."/>
            <person name="Wu T."/>
            <person name="Yu G."/>
            <person name="Miranda M."/>
            <person name="Quach H.L."/>
            <person name="Tripp M."/>
            <person name="Chang C.H."/>
            <person name="Lee J.M."/>
            <person name="Toriumi M.J."/>
            <person name="Chan M.M."/>
            <person name="Tang C.C."/>
            <person name="Onodera C.S."/>
            <person name="Deng J.M."/>
            <person name="Akiyama K."/>
            <person name="Ansari Y."/>
            <person name="Arakawa T."/>
            <person name="Banh J."/>
            <person name="Banno F."/>
            <person name="Bowser L."/>
            <person name="Brooks S.Y."/>
            <person name="Carninci P."/>
            <person name="Chao Q."/>
            <person name="Choy N."/>
            <person name="Enju A."/>
            <person name="Goldsmith A.D."/>
            <person name="Gurjal M."/>
            <person name="Hansen N.F."/>
            <person name="Hayashizaki Y."/>
            <person name="Johnson-Hopson C."/>
            <person name="Hsuan V.W."/>
            <person name="Iida K."/>
            <person name="Karnes M."/>
            <person name="Khan S."/>
            <person name="Koesema E."/>
            <person name="Ishida J."/>
            <person name="Jiang P.X."/>
            <person name="Jones T."/>
            <person name="Kawai J."/>
            <person name="Kamiya A."/>
            <person name="Meyers C."/>
            <person name="Nakajima M."/>
            <person name="Narusaka M."/>
            <person name="Seki M."/>
            <person name="Sakurai T."/>
            <person name="Satou M."/>
            <person name="Tamse R."/>
            <person name="Vaysberg M."/>
            <person name="Wallender E.K."/>
            <person name="Wong C."/>
            <person name="Yamamura Y."/>
            <person name="Yuan S."/>
            <person name="Shinozaki K."/>
            <person name="Davis R.W."/>
            <person name="Theologis A."/>
            <person name="Ecker J.R."/>
        </authorList>
    </citation>
    <scope>NUCLEOTIDE SEQUENCE [LARGE SCALE MRNA]</scope>
    <source>
        <strain>cv. Columbia</strain>
    </source>
</reference>
<reference key="4">
    <citation type="submission" date="2006-07" db="EMBL/GenBank/DDBJ databases">
        <title>Large-scale analysis of RIKEN Arabidopsis full-length (RAFL) cDNAs.</title>
        <authorList>
            <person name="Totoki Y."/>
            <person name="Seki M."/>
            <person name="Ishida J."/>
            <person name="Nakajima M."/>
            <person name="Enju A."/>
            <person name="Kamiya A."/>
            <person name="Narusaka M."/>
            <person name="Shin-i T."/>
            <person name="Nakagawa M."/>
            <person name="Sakamoto N."/>
            <person name="Oishi K."/>
            <person name="Kohara Y."/>
            <person name="Kobayashi M."/>
            <person name="Toyoda A."/>
            <person name="Sakaki Y."/>
            <person name="Sakurai T."/>
            <person name="Iida K."/>
            <person name="Akiyama K."/>
            <person name="Satou M."/>
            <person name="Toyoda T."/>
            <person name="Konagaya A."/>
            <person name="Carninci P."/>
            <person name="Kawai J."/>
            <person name="Hayashizaki Y."/>
            <person name="Shinozaki K."/>
        </authorList>
    </citation>
    <scope>NUCLEOTIDE SEQUENCE [LARGE SCALE MRNA]</scope>
    <source>
        <strain>cv. Columbia</strain>
    </source>
</reference>
<reference key="5">
    <citation type="journal article" date="2001" name="Plant J.">
        <title>Regulation of drought tolerance by gene manipulation of 9-cis-epoxycarotenoid dioxygenase, a key enzyme in abscisic acid biosynthesis in Arabidopsis.</title>
        <authorList>
            <person name="Iuchi S."/>
            <person name="Kobayashi M."/>
            <person name="Taji T."/>
            <person name="Naramoto M."/>
            <person name="Seki M."/>
            <person name="Kato T."/>
            <person name="Tabata S."/>
            <person name="Kakubari Y."/>
            <person name="Yamaguchi-Shinozaki K."/>
            <person name="Shinozaki K."/>
        </authorList>
    </citation>
    <scope>LACK OF INDUCTION BY DROUGHT STRESS</scope>
</reference>
<reference key="6">
    <citation type="journal article" date="2004" name="J. Cell Sci.">
        <title>Arabidopsis VARIEGATED 3 encodes a chloroplast-targeted, zinc-finger protein required for chloroplast and palisade cell development.</title>
        <authorList>
            <person name="Naested H."/>
            <person name="Holm A."/>
            <person name="Jenkins T."/>
            <person name="Nielsen H.B."/>
            <person name="Harris C.A."/>
            <person name="Beale M.H."/>
            <person name="Andersen M."/>
            <person name="Mant A."/>
            <person name="Scheller H."/>
            <person name="Camara B."/>
            <person name="Mattsson O."/>
            <person name="Mundy J."/>
        </authorList>
    </citation>
    <scope>SUBCELLULAR LOCATION</scope>
    <scope>INTERACTION WITH VAR3</scope>
</reference>
<reference key="7">
    <citation type="journal article" date="2006" name="Plant Physiol.">
        <title>Protein profiling of plastoglobules in chloroplasts and chromoplasts. A surprising site for differential accumulation of metabolic enzymes.</title>
        <authorList>
            <person name="Ytterberg A.J."/>
            <person name="Peltier J.-B."/>
            <person name="van Wijk K.J."/>
        </authorList>
    </citation>
    <scope>IDENTIFICATION BY MASS SPECTROMETRY</scope>
    <scope>SUBCELLULAR LOCATION [LARGE SCALE ANALYSIS]</scope>
    <source>
        <strain>cv. Columbia</strain>
    </source>
</reference>
<reference key="8">
    <citation type="journal article" date="2012" name="Plant Physiol.">
        <title>The functional network of the Arabidopsis plastoglobule proteome based on quantitative proteomics and genome-wide coexpression analysis.</title>
        <authorList>
            <person name="Lundquist P.K."/>
            <person name="Poliakov A."/>
            <person name="Bhuiyan N.H."/>
            <person name="Zybailov B."/>
            <person name="Sun Q."/>
            <person name="van Wijk K.J."/>
        </authorList>
    </citation>
    <scope>IDENTIFICATION BY MASS SPECTROMETRY</scope>
    <scope>SUBCELLULAR LOCATION [LARGE SCALE ANALYSIS]</scope>
    <source>
        <strain>cv. Columbia</strain>
    </source>
</reference>
<reference key="9">
    <citation type="journal article" date="2016" name="Plant Cell">
        <title>The plastoglobule-localized metallopeptidase PGM48 is a positive regulator of senescence in Arabidopsis thaliana.</title>
        <authorList>
            <person name="Bhuiyan N.H."/>
            <person name="Friso G."/>
            <person name="Rowland E."/>
            <person name="Majsec K."/>
            <person name="van Wijk K.J."/>
        </authorList>
    </citation>
    <scope>INTERACTION WITH PGM48</scope>
</reference>
<reference key="10">
    <citation type="journal article" date="2017" name="Plant Signal. Behav.">
        <title>Functions and substrates of plastoglobule-localized metallopeptidase PGM48.</title>
        <authorList>
            <person name="Bhuiyan N.H."/>
            <person name="van Wijk K.J."/>
        </authorList>
    </citation>
    <scope>TISSUE SPECIFICITY</scope>
    <scope>DEGRADATION BY PGM48</scope>
</reference>
<protein>
    <recommendedName>
        <fullName evidence="13">Probable carotenoid cleavage dioxygenase 4, chloroplastic</fullName>
        <shortName evidence="13">AtCCD4</shortName>
        <ecNumber evidence="2">1.14.99.-</ecNumber>
    </recommendedName>
    <alternativeName>
        <fullName evidence="11 12">AtNCED4</fullName>
    </alternativeName>
</protein>
<sequence>MDSVSSSSFLSSTFSLHHSLLRRRSSSPTLLRINSAVVEERSPITNPSDNNDRRNKPKTLHNRTNHTLVSSPPKLRPEMTLATALFTTVEDVINTFIDPPSRPSVDPKHVLSDNFAPVLDELPPTDCEIIHGTLPLSLNGAYIRNGPNPQFLPRGPYHLFDGDGMLHAIKIHNGKATLCSRYVKTYKYNVEKQTGAPVMPNVFSGFNGVTASVARGALTAARVLTGQYNPVNGIGLANTSLAFFSNRLFALGESDLPYAVRLTESGDIETIGRYDFDGKLAMSMTAHPKTDPITGETFAFRYGPVPPFLTYFRFDSAGKKQRDVPIFSMTSPSFLHDFAITKRHAIFAEIQLGMRMNMLDLVLEGGSPVGTDNGKTPRLGVIPKYAGDESEMKWFEVPGFNIIHAINAWDEDDGNSVVLIAPNIMSIEHTLERMDLVHALVEKVKIDLVTGIVRRHPISARNLDFAVINPAFLGRCSRYVYAAIGDPMPKISGVVKLDVSKGDRDDCTVARRMYGSGCYGGEPFFVARDPGNPEAEEDDGYVVTYVHDEVTGESKFLVMDAKSPELEIVAAVRLPRRVPYGFHGLFVKESDLNKL</sequence>